<proteinExistence type="evidence at protein level"/>
<name>TSYL4_MOUSE</name>
<protein>
    <recommendedName>
        <fullName>Testis-specific Y-encoded-like protein 4</fullName>
        <shortName>TSPY-like protein 4</shortName>
    </recommendedName>
</protein>
<gene>
    <name type="primary">Tspyl4</name>
    <name type="synonym">D10Bwg0791e</name>
</gene>
<comment type="similarity">
    <text evidence="2">Belongs to the nucleosome assembly protein (NAP) family.</text>
</comment>
<accession>Q8VD63</accession>
<keyword id="KW-1185">Reference proteome</keyword>
<feature type="chain" id="PRO_0000185674" description="Testis-specific Y-encoded-like protein 4">
    <location>
        <begin position="1"/>
        <end position="406"/>
    </location>
</feature>
<feature type="region of interest" description="Disordered" evidence="1">
    <location>
        <begin position="1"/>
        <end position="63"/>
    </location>
</feature>
<feature type="region of interest" description="Disordered" evidence="1">
    <location>
        <begin position="81"/>
        <end position="121"/>
    </location>
</feature>
<feature type="region of interest" description="Disordered" evidence="1">
    <location>
        <begin position="161"/>
        <end position="189"/>
    </location>
</feature>
<feature type="region of interest" description="Disordered" evidence="1">
    <location>
        <begin position="387"/>
        <end position="406"/>
    </location>
</feature>
<feature type="compositionally biased region" description="Polar residues" evidence="1">
    <location>
        <begin position="8"/>
        <end position="20"/>
    </location>
</feature>
<feature type="compositionally biased region" description="Low complexity" evidence="1">
    <location>
        <begin position="93"/>
        <end position="102"/>
    </location>
</feature>
<feature type="compositionally biased region" description="Basic and acidic residues" evidence="1">
    <location>
        <begin position="167"/>
        <end position="188"/>
    </location>
</feature>
<reference key="1">
    <citation type="journal article" date="2005" name="Science">
        <title>The transcriptional landscape of the mammalian genome.</title>
        <authorList>
            <person name="Carninci P."/>
            <person name="Kasukawa T."/>
            <person name="Katayama S."/>
            <person name="Gough J."/>
            <person name="Frith M.C."/>
            <person name="Maeda N."/>
            <person name="Oyama R."/>
            <person name="Ravasi T."/>
            <person name="Lenhard B."/>
            <person name="Wells C."/>
            <person name="Kodzius R."/>
            <person name="Shimokawa K."/>
            <person name="Bajic V.B."/>
            <person name="Brenner S.E."/>
            <person name="Batalov S."/>
            <person name="Forrest A.R."/>
            <person name="Zavolan M."/>
            <person name="Davis M.J."/>
            <person name="Wilming L.G."/>
            <person name="Aidinis V."/>
            <person name="Allen J.E."/>
            <person name="Ambesi-Impiombato A."/>
            <person name="Apweiler R."/>
            <person name="Aturaliya R.N."/>
            <person name="Bailey T.L."/>
            <person name="Bansal M."/>
            <person name="Baxter L."/>
            <person name="Beisel K.W."/>
            <person name="Bersano T."/>
            <person name="Bono H."/>
            <person name="Chalk A.M."/>
            <person name="Chiu K.P."/>
            <person name="Choudhary V."/>
            <person name="Christoffels A."/>
            <person name="Clutterbuck D.R."/>
            <person name="Crowe M.L."/>
            <person name="Dalla E."/>
            <person name="Dalrymple B.P."/>
            <person name="de Bono B."/>
            <person name="Della Gatta G."/>
            <person name="di Bernardo D."/>
            <person name="Down T."/>
            <person name="Engstrom P."/>
            <person name="Fagiolini M."/>
            <person name="Faulkner G."/>
            <person name="Fletcher C.F."/>
            <person name="Fukushima T."/>
            <person name="Furuno M."/>
            <person name="Futaki S."/>
            <person name="Gariboldi M."/>
            <person name="Georgii-Hemming P."/>
            <person name="Gingeras T.R."/>
            <person name="Gojobori T."/>
            <person name="Green R.E."/>
            <person name="Gustincich S."/>
            <person name="Harbers M."/>
            <person name="Hayashi Y."/>
            <person name="Hensch T.K."/>
            <person name="Hirokawa N."/>
            <person name="Hill D."/>
            <person name="Huminiecki L."/>
            <person name="Iacono M."/>
            <person name="Ikeo K."/>
            <person name="Iwama A."/>
            <person name="Ishikawa T."/>
            <person name="Jakt M."/>
            <person name="Kanapin A."/>
            <person name="Katoh M."/>
            <person name="Kawasawa Y."/>
            <person name="Kelso J."/>
            <person name="Kitamura H."/>
            <person name="Kitano H."/>
            <person name="Kollias G."/>
            <person name="Krishnan S.P."/>
            <person name="Kruger A."/>
            <person name="Kummerfeld S.K."/>
            <person name="Kurochkin I.V."/>
            <person name="Lareau L.F."/>
            <person name="Lazarevic D."/>
            <person name="Lipovich L."/>
            <person name="Liu J."/>
            <person name="Liuni S."/>
            <person name="McWilliam S."/>
            <person name="Madan Babu M."/>
            <person name="Madera M."/>
            <person name="Marchionni L."/>
            <person name="Matsuda H."/>
            <person name="Matsuzawa S."/>
            <person name="Miki H."/>
            <person name="Mignone F."/>
            <person name="Miyake S."/>
            <person name="Morris K."/>
            <person name="Mottagui-Tabar S."/>
            <person name="Mulder N."/>
            <person name="Nakano N."/>
            <person name="Nakauchi H."/>
            <person name="Ng P."/>
            <person name="Nilsson R."/>
            <person name="Nishiguchi S."/>
            <person name="Nishikawa S."/>
            <person name="Nori F."/>
            <person name="Ohara O."/>
            <person name="Okazaki Y."/>
            <person name="Orlando V."/>
            <person name="Pang K.C."/>
            <person name="Pavan W.J."/>
            <person name="Pavesi G."/>
            <person name="Pesole G."/>
            <person name="Petrovsky N."/>
            <person name="Piazza S."/>
            <person name="Reed J."/>
            <person name="Reid J.F."/>
            <person name="Ring B.Z."/>
            <person name="Ringwald M."/>
            <person name="Rost B."/>
            <person name="Ruan Y."/>
            <person name="Salzberg S.L."/>
            <person name="Sandelin A."/>
            <person name="Schneider C."/>
            <person name="Schoenbach C."/>
            <person name="Sekiguchi K."/>
            <person name="Semple C.A."/>
            <person name="Seno S."/>
            <person name="Sessa L."/>
            <person name="Sheng Y."/>
            <person name="Shibata Y."/>
            <person name="Shimada H."/>
            <person name="Shimada K."/>
            <person name="Silva D."/>
            <person name="Sinclair B."/>
            <person name="Sperling S."/>
            <person name="Stupka E."/>
            <person name="Sugiura K."/>
            <person name="Sultana R."/>
            <person name="Takenaka Y."/>
            <person name="Taki K."/>
            <person name="Tammoja K."/>
            <person name="Tan S.L."/>
            <person name="Tang S."/>
            <person name="Taylor M.S."/>
            <person name="Tegner J."/>
            <person name="Teichmann S.A."/>
            <person name="Ueda H.R."/>
            <person name="van Nimwegen E."/>
            <person name="Verardo R."/>
            <person name="Wei C.L."/>
            <person name="Yagi K."/>
            <person name="Yamanishi H."/>
            <person name="Zabarovsky E."/>
            <person name="Zhu S."/>
            <person name="Zimmer A."/>
            <person name="Hide W."/>
            <person name="Bult C."/>
            <person name="Grimmond S.M."/>
            <person name="Teasdale R.D."/>
            <person name="Liu E.T."/>
            <person name="Brusic V."/>
            <person name="Quackenbush J."/>
            <person name="Wahlestedt C."/>
            <person name="Mattick J.S."/>
            <person name="Hume D.A."/>
            <person name="Kai C."/>
            <person name="Sasaki D."/>
            <person name="Tomaru Y."/>
            <person name="Fukuda S."/>
            <person name="Kanamori-Katayama M."/>
            <person name="Suzuki M."/>
            <person name="Aoki J."/>
            <person name="Arakawa T."/>
            <person name="Iida J."/>
            <person name="Imamura K."/>
            <person name="Itoh M."/>
            <person name="Kato T."/>
            <person name="Kawaji H."/>
            <person name="Kawagashira N."/>
            <person name="Kawashima T."/>
            <person name="Kojima M."/>
            <person name="Kondo S."/>
            <person name="Konno H."/>
            <person name="Nakano K."/>
            <person name="Ninomiya N."/>
            <person name="Nishio T."/>
            <person name="Okada M."/>
            <person name="Plessy C."/>
            <person name="Shibata K."/>
            <person name="Shiraki T."/>
            <person name="Suzuki S."/>
            <person name="Tagami M."/>
            <person name="Waki K."/>
            <person name="Watahiki A."/>
            <person name="Okamura-Oho Y."/>
            <person name="Suzuki H."/>
            <person name="Kawai J."/>
            <person name="Hayashizaki Y."/>
        </authorList>
    </citation>
    <scope>NUCLEOTIDE SEQUENCE [LARGE SCALE MRNA]</scope>
    <source>
        <strain>C57BL/6J</strain>
    </source>
</reference>
<reference key="2">
    <citation type="journal article" date="2004" name="Genome Res.">
        <title>The status, quality, and expansion of the NIH full-length cDNA project: the Mammalian Gene Collection (MGC).</title>
        <authorList>
            <consortium name="The MGC Project Team"/>
        </authorList>
    </citation>
    <scope>NUCLEOTIDE SEQUENCE [LARGE SCALE MRNA]</scope>
    <source>
        <tissue>Retina</tissue>
    </source>
</reference>
<reference key="3">
    <citation type="journal article" date="2010" name="Cell">
        <title>A tissue-specific atlas of mouse protein phosphorylation and expression.</title>
        <authorList>
            <person name="Huttlin E.L."/>
            <person name="Jedrychowski M.P."/>
            <person name="Elias J.E."/>
            <person name="Goswami T."/>
            <person name="Rad R."/>
            <person name="Beausoleil S.A."/>
            <person name="Villen J."/>
            <person name="Haas W."/>
            <person name="Sowa M.E."/>
            <person name="Gygi S.P."/>
        </authorList>
    </citation>
    <scope>IDENTIFICATION BY MASS SPECTROMETRY [LARGE SCALE ANALYSIS]</scope>
    <source>
        <tissue>Brain</tissue>
    </source>
</reference>
<dbReference type="EMBL" id="AK030740">
    <property type="protein sequence ID" value="BAC27108.1"/>
    <property type="molecule type" value="mRNA"/>
</dbReference>
<dbReference type="EMBL" id="BC017540">
    <property type="protein sequence ID" value="AAH17540.1"/>
    <property type="molecule type" value="mRNA"/>
</dbReference>
<dbReference type="EMBL" id="BC034656">
    <property type="protein sequence ID" value="AAH34656.1"/>
    <property type="molecule type" value="mRNA"/>
</dbReference>
<dbReference type="CCDS" id="CCDS23778.1"/>
<dbReference type="RefSeq" id="NP_084479.1">
    <property type="nucleotide sequence ID" value="NM_030203.2"/>
</dbReference>
<dbReference type="SMR" id="Q8VD63"/>
<dbReference type="BioGRID" id="215392">
    <property type="interactions" value="2"/>
</dbReference>
<dbReference type="FunCoup" id="Q8VD63">
    <property type="interactions" value="575"/>
</dbReference>
<dbReference type="STRING" id="10090.ENSMUSP00000036360"/>
<dbReference type="iPTMnet" id="Q8VD63"/>
<dbReference type="PhosphoSitePlus" id="Q8VD63"/>
<dbReference type="SwissPalm" id="Q8VD63"/>
<dbReference type="PaxDb" id="10090-ENSMUSP00000036360"/>
<dbReference type="ProteomicsDB" id="300048"/>
<dbReference type="Pumba" id="Q8VD63"/>
<dbReference type="Antibodypedia" id="32487">
    <property type="antibodies" value="132 antibodies from 20 providers"/>
</dbReference>
<dbReference type="DNASU" id="72480"/>
<dbReference type="Ensembl" id="ENSMUST00000047935.8">
    <property type="protein sequence ID" value="ENSMUSP00000036360.7"/>
    <property type="gene ID" value="ENSMUSG00000039485.9"/>
</dbReference>
<dbReference type="GeneID" id="72480"/>
<dbReference type="KEGG" id="mmu:72480"/>
<dbReference type="UCSC" id="uc007euu.1">
    <property type="organism name" value="mouse"/>
</dbReference>
<dbReference type="AGR" id="MGI:106393"/>
<dbReference type="CTD" id="23270"/>
<dbReference type="MGI" id="MGI:106393">
    <property type="gene designation" value="Tspyl4"/>
</dbReference>
<dbReference type="VEuPathDB" id="HostDB:ENSMUSG00000039485"/>
<dbReference type="eggNOG" id="KOG1508">
    <property type="taxonomic scope" value="Eukaryota"/>
</dbReference>
<dbReference type="GeneTree" id="ENSGT00940000162991"/>
<dbReference type="HOGENOM" id="CLU_051687_2_0_1"/>
<dbReference type="InParanoid" id="Q8VD63"/>
<dbReference type="OMA" id="NSQENGC"/>
<dbReference type="OrthoDB" id="19419at2759"/>
<dbReference type="PhylomeDB" id="Q8VD63"/>
<dbReference type="TreeFam" id="TF313386"/>
<dbReference type="BioGRID-ORCS" id="72480">
    <property type="hits" value="1 hit in 77 CRISPR screens"/>
</dbReference>
<dbReference type="ChiTaRS" id="Tspyl4">
    <property type="organism name" value="mouse"/>
</dbReference>
<dbReference type="PRO" id="PR:Q8VD63"/>
<dbReference type="Proteomes" id="UP000000589">
    <property type="component" value="Chromosome 10"/>
</dbReference>
<dbReference type="RNAct" id="Q8VD63">
    <property type="molecule type" value="protein"/>
</dbReference>
<dbReference type="Bgee" id="ENSMUSG00000039485">
    <property type="expression patterns" value="Expressed in superior colliculus and 259 other cell types or tissues"/>
</dbReference>
<dbReference type="GO" id="GO:0005634">
    <property type="term" value="C:nucleus"/>
    <property type="evidence" value="ECO:0007669"/>
    <property type="project" value="InterPro"/>
</dbReference>
<dbReference type="GO" id="GO:0006334">
    <property type="term" value="P:nucleosome assembly"/>
    <property type="evidence" value="ECO:0007669"/>
    <property type="project" value="InterPro"/>
</dbReference>
<dbReference type="FunFam" id="3.30.1120.90:FF:000002">
    <property type="entry name" value="Testis-specific Y-encoded-like protein 2"/>
    <property type="match status" value="1"/>
</dbReference>
<dbReference type="Gene3D" id="1.20.5.1500">
    <property type="match status" value="1"/>
</dbReference>
<dbReference type="Gene3D" id="3.30.1120.90">
    <property type="entry name" value="Nucleosome assembly protein"/>
    <property type="match status" value="1"/>
</dbReference>
<dbReference type="InterPro" id="IPR037231">
    <property type="entry name" value="NAP-like_sf"/>
</dbReference>
<dbReference type="InterPro" id="IPR002164">
    <property type="entry name" value="NAP_family"/>
</dbReference>
<dbReference type="PANTHER" id="PTHR11875">
    <property type="entry name" value="TESTIS-SPECIFIC Y-ENCODED PROTEIN"/>
    <property type="match status" value="1"/>
</dbReference>
<dbReference type="Pfam" id="PF00956">
    <property type="entry name" value="NAP"/>
    <property type="match status" value="1"/>
</dbReference>
<dbReference type="SUPFAM" id="SSF143113">
    <property type="entry name" value="NAP-like"/>
    <property type="match status" value="1"/>
</dbReference>
<sequence length="406" mass="44811">MNGVEGNNELSLANTTTPSHASEDLDLKQDQGLQEETDTVREMEAAGEAGADGGASPDSEHCGPELCFRVAENSCAAAARGLEDAPSPSKGGDAPSAPVAADDSSKNGCQLEGPHSPAKPKALEACGAVGLGSQQMPGPKKTKEMTTTKCAISVATGKEGEAGAAMQEKKGLQKEKKVAGGGKEETRPRAPKINCMDSLEAIDQELSNVNAQADRAFLQLERKFGRMRRLHMQRRSFIIQNIPGFWVTAFRNHPQLSPMISGQDEDMMRYMINLEVEELKQPRVGCKFKFIFQSNPYFRNEGLVKEYERRSSGRVVSLSTPIRWHRGQEPQAHIHRNREGNTIPSFFNWFSDHSLLEFDRIAEIIKGELWSNPLQYYLMGDGPRRGVRVPPRQPVESPRSFRFQSG</sequence>
<evidence type="ECO:0000256" key="1">
    <source>
        <dbReference type="SAM" id="MobiDB-lite"/>
    </source>
</evidence>
<evidence type="ECO:0000305" key="2"/>
<organism>
    <name type="scientific">Mus musculus</name>
    <name type="common">Mouse</name>
    <dbReference type="NCBI Taxonomy" id="10090"/>
    <lineage>
        <taxon>Eukaryota</taxon>
        <taxon>Metazoa</taxon>
        <taxon>Chordata</taxon>
        <taxon>Craniata</taxon>
        <taxon>Vertebrata</taxon>
        <taxon>Euteleostomi</taxon>
        <taxon>Mammalia</taxon>
        <taxon>Eutheria</taxon>
        <taxon>Euarchontoglires</taxon>
        <taxon>Glires</taxon>
        <taxon>Rodentia</taxon>
        <taxon>Myomorpha</taxon>
        <taxon>Muroidea</taxon>
        <taxon>Muridae</taxon>
        <taxon>Murinae</taxon>
        <taxon>Mus</taxon>
        <taxon>Mus</taxon>
    </lineage>
</organism>